<accession>Q5XAQ7</accession>
<accession>P82482</accession>
<name>HPF_STRP6</name>
<protein>
    <recommendedName>
        <fullName evidence="1">Ribosome hibernation promotion factor</fullName>
        <shortName evidence="1">HPF</shortName>
    </recommendedName>
    <alternativeName>
        <fullName evidence="3">Ribosome-associated factor Y</fullName>
    </alternativeName>
</protein>
<proteinExistence type="evidence at protein level"/>
<sequence>MIKFSIRGENIEVTEAIRDYVESKLTKIEKYFAKDQEIDARVNLKVYRERSSKVEVTIPLDSVTLRAEDVSQDMYGSIDLVVDKIERQIRKNKTKIAKKHREKVPTGQVFTTEFEAEEVDEIPEVQVVRTKNVTLKPMDVEEARLQMELLGHDFFIYTDSEDGATNILYRREDGNLGLIEAK</sequence>
<evidence type="ECO:0000255" key="1">
    <source>
        <dbReference type="HAMAP-Rule" id="MF_00839"/>
    </source>
</evidence>
<evidence type="ECO:0000269" key="2">
    <source>
    </source>
</evidence>
<evidence type="ECO:0000303" key="3">
    <source ref="3"/>
</evidence>
<evidence type="ECO:0000305" key="4"/>
<evidence type="ECO:0007829" key="5">
    <source>
        <dbReference type="PDB" id="3LYV"/>
    </source>
</evidence>
<feature type="chain" id="PRO_0000259418" description="Ribosome hibernation promotion factor">
    <location>
        <begin position="1"/>
        <end position="182"/>
    </location>
</feature>
<feature type="helix" evidence="5">
    <location>
        <begin position="140"/>
        <end position="148"/>
    </location>
</feature>
<feature type="strand" evidence="5">
    <location>
        <begin position="153"/>
        <end position="159"/>
    </location>
</feature>
<feature type="turn" evidence="5">
    <location>
        <begin position="160"/>
        <end position="162"/>
    </location>
</feature>
<feature type="strand" evidence="5">
    <location>
        <begin position="164"/>
        <end position="170"/>
    </location>
</feature>
<feature type="strand" evidence="5">
    <location>
        <begin position="174"/>
        <end position="181"/>
    </location>
</feature>
<comment type="function">
    <text evidence="1">Required for dimerization of active 70S ribosomes into 100S ribosomes in stationary phase; 100S ribosomes are translationally inactive and sometimes present during exponential growth.</text>
</comment>
<comment type="subunit">
    <text evidence="1">Interacts with 100S ribosomes.</text>
</comment>
<comment type="subcellular location">
    <subcellularLocation>
        <location evidence="1">Cytoplasm</location>
    </subcellularLocation>
</comment>
<comment type="similarity">
    <text evidence="1">Belongs to the HPF/YfiA ribosome-associated protein family. Long HPF subfamily.</text>
</comment>
<gene>
    <name evidence="1" type="primary">hpf</name>
    <name type="ordered locus">M6_Spy1371</name>
</gene>
<keyword id="KW-0002">3D-structure</keyword>
<keyword id="KW-0963">Cytoplasm</keyword>
<keyword id="KW-0903">Direct protein sequencing</keyword>
<keyword id="KW-0810">Translation regulation</keyword>
<organism>
    <name type="scientific">Streptococcus pyogenes serotype M6 (strain ATCC BAA-946 / MGAS10394)</name>
    <dbReference type="NCBI Taxonomy" id="286636"/>
    <lineage>
        <taxon>Bacteria</taxon>
        <taxon>Bacillati</taxon>
        <taxon>Bacillota</taxon>
        <taxon>Bacilli</taxon>
        <taxon>Lactobacillales</taxon>
        <taxon>Streptococcaceae</taxon>
        <taxon>Streptococcus</taxon>
    </lineage>
</organism>
<reference key="1">
    <citation type="journal article" date="2004" name="J. Infect. Dis.">
        <title>Progress toward characterization of the group A Streptococcus metagenome: complete genome sequence of a macrolide-resistant serotype M6 strain.</title>
        <authorList>
            <person name="Banks D.J."/>
            <person name="Porcella S.F."/>
            <person name="Barbian K.D."/>
            <person name="Beres S.B."/>
            <person name="Philips L.E."/>
            <person name="Voyich J.M."/>
            <person name="DeLeo F.R."/>
            <person name="Martin J.M."/>
            <person name="Somerville G.A."/>
            <person name="Musser J.M."/>
        </authorList>
    </citation>
    <scope>NUCLEOTIDE SEQUENCE [LARGE SCALE GENOMIC DNA]</scope>
    <source>
        <strain>ATCC BAA-946 / MGAS10394</strain>
    </source>
</reference>
<reference evidence="4" key="2">
    <citation type="submission" date="2000-05" db="UniProtKB">
        <title>Two-dimensional gel electrophoresis map of Streptococcus pyogenes proteins.</title>
        <authorList>
            <person name="Hogan D.A."/>
            <person name="Du P."/>
            <person name="Stevenson T.I."/>
            <person name="Whitton M."/>
            <person name="Kilby G.W."/>
            <person name="Rogers J."/>
            <person name="VanBogelen R.A."/>
        </authorList>
    </citation>
    <scope>PROTEIN SEQUENCE OF 1-24; 31-87; 102-129 AND 132-182</scope>
    <source>
        <strain evidence="2">JRS4 / Serotype M6</strain>
    </source>
</reference>
<reference key="3">
    <citation type="submission" date="2010-02" db="PDB data bank">
        <title>Crystal structure of a domain of ribosome-associated factor Y from Streptococcus pyogenes serotype M6. Northeast structural genomics consortium target id DR64A.</title>
        <authorList>
            <person name="Seetharaman J."/>
            <person name="Neely H."/>
            <person name="Forouhar F."/>
            <person name="Wang D."/>
            <person name="Janjua H."/>
            <person name="Cunningham K."/>
            <person name="Owens L."/>
            <person name="Xiao R."/>
            <person name="Liu J."/>
            <person name="Baran M.C."/>
            <person name="Acton T.B."/>
            <person name="Montelione G.T."/>
            <person name="Hunt J.F."/>
            <person name="Tong L."/>
        </authorList>
    </citation>
    <scope>X-RAY CRYSTALLOGRAPHY (2.70 ANGSTROMS) OF 126-182</scope>
</reference>
<dbReference type="EMBL" id="CP000003">
    <property type="protein sequence ID" value="AAT87506.1"/>
    <property type="molecule type" value="Genomic_DNA"/>
</dbReference>
<dbReference type="RefSeq" id="WP_002988974.1">
    <property type="nucleotide sequence ID" value="NC_006086.1"/>
</dbReference>
<dbReference type="PDB" id="3LYV">
    <property type="method" value="X-ray"/>
    <property type="resolution" value="2.70 A"/>
    <property type="chains" value="A/B/C/D/E/F=126-182"/>
</dbReference>
<dbReference type="PDBsum" id="3LYV"/>
<dbReference type="SMR" id="Q5XAQ7"/>
<dbReference type="GeneID" id="69900513"/>
<dbReference type="KEGG" id="spa:M6_Spy1371"/>
<dbReference type="HOGENOM" id="CLU_071472_0_3_9"/>
<dbReference type="EvolutionaryTrace" id="Q5XAQ7"/>
<dbReference type="Proteomes" id="UP000001167">
    <property type="component" value="Chromosome"/>
</dbReference>
<dbReference type="GO" id="GO:0022627">
    <property type="term" value="C:cytosolic small ribosomal subunit"/>
    <property type="evidence" value="ECO:0007669"/>
    <property type="project" value="TreeGrafter"/>
</dbReference>
<dbReference type="GO" id="GO:0043024">
    <property type="term" value="F:ribosomal small subunit binding"/>
    <property type="evidence" value="ECO:0007669"/>
    <property type="project" value="TreeGrafter"/>
</dbReference>
<dbReference type="GO" id="GO:0045900">
    <property type="term" value="P:negative regulation of translational elongation"/>
    <property type="evidence" value="ECO:0007669"/>
    <property type="project" value="TreeGrafter"/>
</dbReference>
<dbReference type="CDD" id="cd00552">
    <property type="entry name" value="RaiA"/>
    <property type="match status" value="1"/>
</dbReference>
<dbReference type="FunFam" id="3.30.505.50:FF:000001">
    <property type="entry name" value="Ribosome hibernation promoting factor"/>
    <property type="match status" value="1"/>
</dbReference>
<dbReference type="Gene3D" id="3.30.160.100">
    <property type="entry name" value="Ribosome hibernation promotion factor-like"/>
    <property type="match status" value="1"/>
</dbReference>
<dbReference type="Gene3D" id="3.30.505.50">
    <property type="entry name" value="Sigma 54 modulation/S30EA ribosomal protein, C-terminal domain"/>
    <property type="match status" value="1"/>
</dbReference>
<dbReference type="HAMAP" id="MF_00839">
    <property type="entry name" value="HPF"/>
    <property type="match status" value="1"/>
</dbReference>
<dbReference type="InterPro" id="IPR050574">
    <property type="entry name" value="HPF/YfiA_ribosome-assoc"/>
</dbReference>
<dbReference type="InterPro" id="IPR034694">
    <property type="entry name" value="HPF_long/plastid"/>
</dbReference>
<dbReference type="InterPro" id="IPR036567">
    <property type="entry name" value="RHF-like"/>
</dbReference>
<dbReference type="InterPro" id="IPR003489">
    <property type="entry name" value="RHF/RaiA"/>
</dbReference>
<dbReference type="InterPro" id="IPR032528">
    <property type="entry name" value="Ribosom_S30AE_C"/>
</dbReference>
<dbReference type="InterPro" id="IPR038416">
    <property type="entry name" value="Ribosom_S30AE_C_sf"/>
</dbReference>
<dbReference type="NCBIfam" id="TIGR00741">
    <property type="entry name" value="yfiA"/>
    <property type="match status" value="1"/>
</dbReference>
<dbReference type="PANTHER" id="PTHR33231">
    <property type="entry name" value="30S RIBOSOMAL PROTEIN"/>
    <property type="match status" value="1"/>
</dbReference>
<dbReference type="PANTHER" id="PTHR33231:SF1">
    <property type="entry name" value="30S RIBOSOMAL PROTEIN"/>
    <property type="match status" value="1"/>
</dbReference>
<dbReference type="Pfam" id="PF16321">
    <property type="entry name" value="Ribosom_S30AE_C"/>
    <property type="match status" value="1"/>
</dbReference>
<dbReference type="Pfam" id="PF02482">
    <property type="entry name" value="Ribosomal_S30AE"/>
    <property type="match status" value="1"/>
</dbReference>
<dbReference type="SUPFAM" id="SSF69754">
    <property type="entry name" value="Ribosome binding protein Y (YfiA homologue)"/>
    <property type="match status" value="1"/>
</dbReference>